<name>RS21_SALCH</name>
<feature type="initiator methionine" description="Removed" evidence="1">
    <location>
        <position position="1"/>
    </location>
</feature>
<feature type="chain" id="PRO_0000266757" description="Small ribosomal subunit protein bS21">
    <location>
        <begin position="2"/>
        <end position="71"/>
    </location>
</feature>
<feature type="region of interest" description="Disordered" evidence="3">
    <location>
        <begin position="43"/>
        <end position="71"/>
    </location>
</feature>
<feature type="compositionally biased region" description="Basic residues" evidence="3">
    <location>
        <begin position="46"/>
        <end position="59"/>
    </location>
</feature>
<feature type="compositionally biased region" description="Basic and acidic residues" evidence="3">
    <location>
        <begin position="60"/>
        <end position="71"/>
    </location>
</feature>
<comment type="similarity">
    <text evidence="2">Belongs to the bacterial ribosomal protein bS21 family.</text>
</comment>
<dbReference type="EMBL" id="AE017220">
    <property type="protein sequence ID" value="AAX67062.1"/>
    <property type="molecule type" value="Genomic_DNA"/>
</dbReference>
<dbReference type="RefSeq" id="WP_001144069.1">
    <property type="nucleotide sequence ID" value="NC_006905.1"/>
</dbReference>
<dbReference type="SMR" id="Q57JQ0"/>
<dbReference type="GeneID" id="98390195"/>
<dbReference type="KEGG" id="sec:SCH_3156"/>
<dbReference type="HOGENOM" id="CLU_159258_1_0_6"/>
<dbReference type="Proteomes" id="UP000000538">
    <property type="component" value="Chromosome"/>
</dbReference>
<dbReference type="GO" id="GO:1990904">
    <property type="term" value="C:ribonucleoprotein complex"/>
    <property type="evidence" value="ECO:0007669"/>
    <property type="project" value="UniProtKB-KW"/>
</dbReference>
<dbReference type="GO" id="GO:0005840">
    <property type="term" value="C:ribosome"/>
    <property type="evidence" value="ECO:0007669"/>
    <property type="project" value="UniProtKB-KW"/>
</dbReference>
<dbReference type="GO" id="GO:0003735">
    <property type="term" value="F:structural constituent of ribosome"/>
    <property type="evidence" value="ECO:0007669"/>
    <property type="project" value="InterPro"/>
</dbReference>
<dbReference type="GO" id="GO:0006412">
    <property type="term" value="P:translation"/>
    <property type="evidence" value="ECO:0007669"/>
    <property type="project" value="UniProtKB-UniRule"/>
</dbReference>
<dbReference type="FunFam" id="1.20.5.1150:FF:000001">
    <property type="entry name" value="30S ribosomal protein S21"/>
    <property type="match status" value="1"/>
</dbReference>
<dbReference type="Gene3D" id="1.20.5.1150">
    <property type="entry name" value="Ribosomal protein S8"/>
    <property type="match status" value="1"/>
</dbReference>
<dbReference type="HAMAP" id="MF_00358">
    <property type="entry name" value="Ribosomal_bS21"/>
    <property type="match status" value="1"/>
</dbReference>
<dbReference type="InterPro" id="IPR001911">
    <property type="entry name" value="Ribosomal_bS21"/>
</dbReference>
<dbReference type="InterPro" id="IPR018278">
    <property type="entry name" value="Ribosomal_bS21_CS"/>
</dbReference>
<dbReference type="InterPro" id="IPR038380">
    <property type="entry name" value="Ribosomal_bS21_sf"/>
</dbReference>
<dbReference type="NCBIfam" id="TIGR00030">
    <property type="entry name" value="S21p"/>
    <property type="match status" value="1"/>
</dbReference>
<dbReference type="PANTHER" id="PTHR21109">
    <property type="entry name" value="MITOCHONDRIAL 28S RIBOSOMAL PROTEIN S21"/>
    <property type="match status" value="1"/>
</dbReference>
<dbReference type="PANTHER" id="PTHR21109:SF22">
    <property type="entry name" value="SMALL RIBOSOMAL SUBUNIT PROTEIN BS21"/>
    <property type="match status" value="1"/>
</dbReference>
<dbReference type="Pfam" id="PF01165">
    <property type="entry name" value="Ribosomal_S21"/>
    <property type="match status" value="1"/>
</dbReference>
<dbReference type="PRINTS" id="PR00976">
    <property type="entry name" value="RIBOSOMALS21"/>
</dbReference>
<dbReference type="PROSITE" id="PS01181">
    <property type="entry name" value="RIBOSOMAL_S21"/>
    <property type="match status" value="1"/>
</dbReference>
<protein>
    <recommendedName>
        <fullName evidence="2">Small ribosomal subunit protein bS21</fullName>
    </recommendedName>
    <alternativeName>
        <fullName evidence="4">30S ribosomal protein S21</fullName>
    </alternativeName>
</protein>
<reference key="1">
    <citation type="journal article" date="2005" name="Nucleic Acids Res.">
        <title>The genome sequence of Salmonella enterica serovar Choleraesuis, a highly invasive and resistant zoonotic pathogen.</title>
        <authorList>
            <person name="Chiu C.-H."/>
            <person name="Tang P."/>
            <person name="Chu C."/>
            <person name="Hu S."/>
            <person name="Bao Q."/>
            <person name="Yu J."/>
            <person name="Chou Y.-Y."/>
            <person name="Wang H.-S."/>
            <person name="Lee Y.-S."/>
        </authorList>
    </citation>
    <scope>NUCLEOTIDE SEQUENCE [LARGE SCALE GENOMIC DNA]</scope>
    <source>
        <strain>SC-B67</strain>
    </source>
</reference>
<gene>
    <name evidence="2" type="primary">rpsU</name>
    <name type="ordered locus">SCH_3156</name>
</gene>
<keyword id="KW-0687">Ribonucleoprotein</keyword>
<keyword id="KW-0689">Ribosomal protein</keyword>
<organism>
    <name type="scientific">Salmonella choleraesuis (strain SC-B67)</name>
    <dbReference type="NCBI Taxonomy" id="321314"/>
    <lineage>
        <taxon>Bacteria</taxon>
        <taxon>Pseudomonadati</taxon>
        <taxon>Pseudomonadota</taxon>
        <taxon>Gammaproteobacteria</taxon>
        <taxon>Enterobacterales</taxon>
        <taxon>Enterobacteriaceae</taxon>
        <taxon>Salmonella</taxon>
    </lineage>
</organism>
<accession>Q57JQ0</accession>
<proteinExistence type="inferred from homology"/>
<evidence type="ECO:0000250" key="1"/>
<evidence type="ECO:0000255" key="2">
    <source>
        <dbReference type="HAMAP-Rule" id="MF_00358"/>
    </source>
</evidence>
<evidence type="ECO:0000256" key="3">
    <source>
        <dbReference type="SAM" id="MobiDB-lite"/>
    </source>
</evidence>
<evidence type="ECO:0000305" key="4"/>
<sequence>MPVIKVRENEPFDVALRRFKRSCEKAGVLAEVRRREFYEKPTTERKRAKASAVKRHAKKLARENARRTRLY</sequence>